<name>RLME_BURMS</name>
<keyword id="KW-0963">Cytoplasm</keyword>
<keyword id="KW-0489">Methyltransferase</keyword>
<keyword id="KW-0698">rRNA processing</keyword>
<keyword id="KW-0949">S-adenosyl-L-methionine</keyword>
<keyword id="KW-0808">Transferase</keyword>
<gene>
    <name evidence="1" type="primary">rlmE</name>
    <name evidence="1" type="synonym">ftsJ</name>
    <name evidence="1" type="synonym">rrmJ</name>
    <name type="ordered locus">BMASAVP1_A1287</name>
</gene>
<dbReference type="EC" id="2.1.1.166" evidence="1"/>
<dbReference type="EMBL" id="CP000526">
    <property type="protein sequence ID" value="ABM50362.1"/>
    <property type="status" value="ALT_INIT"/>
    <property type="molecule type" value="Genomic_DNA"/>
</dbReference>
<dbReference type="RefSeq" id="WP_004193119.1">
    <property type="nucleotide sequence ID" value="NC_008785.1"/>
</dbReference>
<dbReference type="SMR" id="A1V319"/>
<dbReference type="KEGG" id="bmv:BMASAVP1_A1287"/>
<dbReference type="HOGENOM" id="CLU_009422_4_1_4"/>
<dbReference type="GO" id="GO:0005737">
    <property type="term" value="C:cytoplasm"/>
    <property type="evidence" value="ECO:0007669"/>
    <property type="project" value="UniProtKB-SubCell"/>
</dbReference>
<dbReference type="GO" id="GO:0008650">
    <property type="term" value="F:rRNA (uridine-2'-O-)-methyltransferase activity"/>
    <property type="evidence" value="ECO:0007669"/>
    <property type="project" value="UniProtKB-UniRule"/>
</dbReference>
<dbReference type="FunFam" id="3.40.50.150:FF:000005">
    <property type="entry name" value="Ribosomal RNA large subunit methyltransferase E"/>
    <property type="match status" value="1"/>
</dbReference>
<dbReference type="Gene3D" id="3.40.50.150">
    <property type="entry name" value="Vaccinia Virus protein VP39"/>
    <property type="match status" value="1"/>
</dbReference>
<dbReference type="HAMAP" id="MF_01547">
    <property type="entry name" value="RNA_methyltr_E"/>
    <property type="match status" value="1"/>
</dbReference>
<dbReference type="InterPro" id="IPR050082">
    <property type="entry name" value="RNA_methyltr_RlmE"/>
</dbReference>
<dbReference type="InterPro" id="IPR002877">
    <property type="entry name" value="RNA_MeTrfase_FtsJ_dom"/>
</dbReference>
<dbReference type="InterPro" id="IPR015507">
    <property type="entry name" value="rRNA-MeTfrase_E"/>
</dbReference>
<dbReference type="InterPro" id="IPR029063">
    <property type="entry name" value="SAM-dependent_MTases_sf"/>
</dbReference>
<dbReference type="PANTHER" id="PTHR10920">
    <property type="entry name" value="RIBOSOMAL RNA METHYLTRANSFERASE"/>
    <property type="match status" value="1"/>
</dbReference>
<dbReference type="PANTHER" id="PTHR10920:SF18">
    <property type="entry name" value="RRNA METHYLTRANSFERASE 2, MITOCHONDRIAL"/>
    <property type="match status" value="1"/>
</dbReference>
<dbReference type="Pfam" id="PF01728">
    <property type="entry name" value="FtsJ"/>
    <property type="match status" value="1"/>
</dbReference>
<dbReference type="PIRSF" id="PIRSF005461">
    <property type="entry name" value="23S_rRNA_mtase"/>
    <property type="match status" value="1"/>
</dbReference>
<dbReference type="SUPFAM" id="SSF53335">
    <property type="entry name" value="S-adenosyl-L-methionine-dependent methyltransferases"/>
    <property type="match status" value="1"/>
</dbReference>
<sequence length="220" mass="24660">MAKNRFNQSWLHDHINDPYVKMAQREGYRARAAYKLKEIDEQDKLIRPGQVIVDLGAAPGSWSQYARNKLAQGKRRDAVREGGIDGTIIALDMLPMEPVADVHFIQGDFREESVLHQLEEVLAGRAVDLVISDMAPNLSGVAVADAARIEHVCDLALEFAQNHLKPDGALLVKCFHGSGYSQIVEKFKHQFKTVAPRKPKASRDKSSETFILGRHLKQPR</sequence>
<accession>A1V319</accession>
<protein>
    <recommendedName>
        <fullName evidence="1">Ribosomal RNA large subunit methyltransferase E</fullName>
        <ecNumber evidence="1">2.1.1.166</ecNumber>
    </recommendedName>
    <alternativeName>
        <fullName evidence="1">23S rRNA Um2552 methyltransferase</fullName>
    </alternativeName>
    <alternativeName>
        <fullName evidence="1">rRNA (uridine-2'-O-)-methyltransferase</fullName>
    </alternativeName>
</protein>
<feature type="chain" id="PRO_0000333320" description="Ribosomal RNA large subunit methyltransferase E">
    <location>
        <begin position="1"/>
        <end position="220"/>
    </location>
</feature>
<feature type="region of interest" description="Disordered" evidence="2">
    <location>
        <begin position="195"/>
        <end position="220"/>
    </location>
</feature>
<feature type="active site" description="Proton acceptor" evidence="1">
    <location>
        <position position="173"/>
    </location>
</feature>
<feature type="binding site" evidence="1">
    <location>
        <position position="60"/>
    </location>
    <ligand>
        <name>S-adenosyl-L-methionine</name>
        <dbReference type="ChEBI" id="CHEBI:59789"/>
    </ligand>
</feature>
<feature type="binding site" evidence="1">
    <location>
        <position position="62"/>
    </location>
    <ligand>
        <name>S-adenosyl-L-methionine</name>
        <dbReference type="ChEBI" id="CHEBI:59789"/>
    </ligand>
</feature>
<feature type="binding site" evidence="1">
    <location>
        <position position="92"/>
    </location>
    <ligand>
        <name>S-adenosyl-L-methionine</name>
        <dbReference type="ChEBI" id="CHEBI:59789"/>
    </ligand>
</feature>
<feature type="binding site" evidence="1">
    <location>
        <position position="108"/>
    </location>
    <ligand>
        <name>S-adenosyl-L-methionine</name>
        <dbReference type="ChEBI" id="CHEBI:59789"/>
    </ligand>
</feature>
<feature type="binding site" evidence="1">
    <location>
        <position position="133"/>
    </location>
    <ligand>
        <name>S-adenosyl-L-methionine</name>
        <dbReference type="ChEBI" id="CHEBI:59789"/>
    </ligand>
</feature>
<proteinExistence type="inferred from homology"/>
<comment type="function">
    <text evidence="1">Specifically methylates the uridine in position 2552 of 23S rRNA at the 2'-O position of the ribose in the fully assembled 50S ribosomal subunit.</text>
</comment>
<comment type="catalytic activity">
    <reaction evidence="1">
        <text>uridine(2552) in 23S rRNA + S-adenosyl-L-methionine = 2'-O-methyluridine(2552) in 23S rRNA + S-adenosyl-L-homocysteine + H(+)</text>
        <dbReference type="Rhea" id="RHEA:42720"/>
        <dbReference type="Rhea" id="RHEA-COMP:10202"/>
        <dbReference type="Rhea" id="RHEA-COMP:10203"/>
        <dbReference type="ChEBI" id="CHEBI:15378"/>
        <dbReference type="ChEBI" id="CHEBI:57856"/>
        <dbReference type="ChEBI" id="CHEBI:59789"/>
        <dbReference type="ChEBI" id="CHEBI:65315"/>
        <dbReference type="ChEBI" id="CHEBI:74478"/>
        <dbReference type="EC" id="2.1.1.166"/>
    </reaction>
</comment>
<comment type="subcellular location">
    <subcellularLocation>
        <location evidence="1">Cytoplasm</location>
    </subcellularLocation>
</comment>
<comment type="similarity">
    <text evidence="1">Belongs to the class I-like SAM-binding methyltransferase superfamily. RNA methyltransferase RlmE family.</text>
</comment>
<comment type="sequence caution" evidence="3">
    <conflict type="erroneous initiation">
        <sequence resource="EMBL-CDS" id="ABM50362"/>
    </conflict>
</comment>
<reference key="1">
    <citation type="journal article" date="2010" name="Genome Biol. Evol.">
        <title>Continuing evolution of Burkholderia mallei through genome reduction and large-scale rearrangements.</title>
        <authorList>
            <person name="Losada L."/>
            <person name="Ronning C.M."/>
            <person name="DeShazer D."/>
            <person name="Woods D."/>
            <person name="Fedorova N."/>
            <person name="Kim H.S."/>
            <person name="Shabalina S.A."/>
            <person name="Pearson T.R."/>
            <person name="Brinkac L."/>
            <person name="Tan P."/>
            <person name="Nandi T."/>
            <person name="Crabtree J."/>
            <person name="Badger J."/>
            <person name="Beckstrom-Sternberg S."/>
            <person name="Saqib M."/>
            <person name="Schutzer S.E."/>
            <person name="Keim P."/>
            <person name="Nierman W.C."/>
        </authorList>
    </citation>
    <scope>NUCLEOTIDE SEQUENCE [LARGE SCALE GENOMIC DNA]</scope>
    <source>
        <strain>SAVP1</strain>
    </source>
</reference>
<evidence type="ECO:0000255" key="1">
    <source>
        <dbReference type="HAMAP-Rule" id="MF_01547"/>
    </source>
</evidence>
<evidence type="ECO:0000256" key="2">
    <source>
        <dbReference type="SAM" id="MobiDB-lite"/>
    </source>
</evidence>
<evidence type="ECO:0000305" key="3"/>
<organism>
    <name type="scientific">Burkholderia mallei (strain SAVP1)</name>
    <dbReference type="NCBI Taxonomy" id="320388"/>
    <lineage>
        <taxon>Bacteria</taxon>
        <taxon>Pseudomonadati</taxon>
        <taxon>Pseudomonadota</taxon>
        <taxon>Betaproteobacteria</taxon>
        <taxon>Burkholderiales</taxon>
        <taxon>Burkholderiaceae</taxon>
        <taxon>Burkholderia</taxon>
        <taxon>pseudomallei group</taxon>
    </lineage>
</organism>